<accession>B2SQT4</accession>
<name>RPOA_XANOP</name>
<keyword id="KW-0002">3D-structure</keyword>
<keyword id="KW-0240">DNA-directed RNA polymerase</keyword>
<keyword id="KW-0548">Nucleotidyltransferase</keyword>
<keyword id="KW-0804">Transcription</keyword>
<keyword id="KW-0808">Transferase</keyword>
<comment type="function">
    <text evidence="1">DNA-dependent RNA polymerase catalyzes the transcription of DNA into RNA using the four ribonucleoside triphosphates as substrates.</text>
</comment>
<comment type="catalytic activity">
    <reaction evidence="1">
        <text>RNA(n) + a ribonucleoside 5'-triphosphate = RNA(n+1) + diphosphate</text>
        <dbReference type="Rhea" id="RHEA:21248"/>
        <dbReference type="Rhea" id="RHEA-COMP:14527"/>
        <dbReference type="Rhea" id="RHEA-COMP:17342"/>
        <dbReference type="ChEBI" id="CHEBI:33019"/>
        <dbReference type="ChEBI" id="CHEBI:61557"/>
        <dbReference type="ChEBI" id="CHEBI:140395"/>
        <dbReference type="EC" id="2.7.7.6"/>
    </reaction>
</comment>
<comment type="subunit">
    <text evidence="1">Homodimer. The RNAP catalytic core consists of 2 alpha, 1 beta, 1 beta' and 1 omega subunit. When a sigma factor is associated with the core the holoenzyme is formed, which can initiate transcription.</text>
</comment>
<comment type="domain">
    <text evidence="1">The N-terminal domain is essential for RNAP assembly and basal transcription, whereas the C-terminal domain is involved in interaction with transcriptional regulators and with upstream promoter elements.</text>
</comment>
<comment type="similarity">
    <text evidence="1">Belongs to the RNA polymerase alpha chain family.</text>
</comment>
<gene>
    <name evidence="1" type="primary">rpoA</name>
    <name type="ordered locus">PXO_04496</name>
</gene>
<proteinExistence type="evidence at protein level"/>
<protein>
    <recommendedName>
        <fullName evidence="1">DNA-directed RNA polymerase subunit alpha</fullName>
        <shortName evidence="1">RNAP subunit alpha</shortName>
        <ecNumber evidence="1">2.7.7.6</ecNumber>
    </recommendedName>
    <alternativeName>
        <fullName evidence="1">RNA polymerase subunit alpha</fullName>
    </alternativeName>
    <alternativeName>
        <fullName evidence="1">Transcriptase subunit alpha</fullName>
    </alternativeName>
</protein>
<sequence length="332" mass="36364">MTVTANQVLRPRGPQIERLTDNRAKVVIEPLERGYGHTLGNALRRVLLSSIPGFAITEVEIDGVLHEYTTVEGLQEDVLDVLLNLKDVAIRMHSGDSATLSLSKQGPGTVTAADIRTDHNVEIINGDHVICHLTKDTALNMRLKIERGFGYQPAAARRRPDEETRTIGRLMLDASFSPVRRVAYAVEAARVEQRTDLDKLVIDIETNGTIDAEEAVRTAADILSDQLSVFGDFTHRDRGAAKPAASGVDPVLLRPIDDLELTVRSANCLKAESIYYIGDLIQKTEVELLKTPNLGKKSLTEIKEVLAQRGLALGMKLENWPPAGVAQHGMLG</sequence>
<reference key="1">
    <citation type="journal article" date="2008" name="BMC Genomics">
        <title>Genome sequence and rapid evolution of the rice pathogen Xanthomonas oryzae pv. oryzae PXO99A.</title>
        <authorList>
            <person name="Salzberg S.L."/>
            <person name="Sommer D.D."/>
            <person name="Schatz M.C."/>
            <person name="Phillippy A.M."/>
            <person name="Rabinowicz P.D."/>
            <person name="Tsuge S."/>
            <person name="Furutani A."/>
            <person name="Ochiai H."/>
            <person name="Delcher A.L."/>
            <person name="Kelley D."/>
            <person name="Madupu R."/>
            <person name="Puiu D."/>
            <person name="Radune D."/>
            <person name="Shumway M."/>
            <person name="Trapnell C."/>
            <person name="Aparna G."/>
            <person name="Jha G."/>
            <person name="Pandey A."/>
            <person name="Patil P.B."/>
            <person name="Ishihara H."/>
            <person name="Meyer D.F."/>
            <person name="Szurek B."/>
            <person name="Verdier V."/>
            <person name="Koebnik R."/>
            <person name="Dow J.M."/>
            <person name="Ryan R.P."/>
            <person name="Hirata H."/>
            <person name="Tsuyumu S."/>
            <person name="Won Lee S."/>
            <person name="Seo Y.-S."/>
            <person name="Sriariyanum M."/>
            <person name="Ronald P.C."/>
            <person name="Sonti R.V."/>
            <person name="Van Sluys M.-A."/>
            <person name="Leach J.E."/>
            <person name="White F.F."/>
            <person name="Bogdanove A.J."/>
        </authorList>
    </citation>
    <scope>NUCLEOTIDE SEQUENCE [LARGE SCALE GENOMIC DNA]</scope>
    <source>
        <strain>PXO99A</strain>
    </source>
</reference>
<feature type="chain" id="PRO_1000091975" description="DNA-directed RNA polymerase subunit alpha">
    <location>
        <begin position="1"/>
        <end position="332"/>
    </location>
</feature>
<feature type="region of interest" description="Alpha N-terminal domain (alpha-NTD)" evidence="1">
    <location>
        <begin position="1"/>
        <end position="234"/>
    </location>
</feature>
<feature type="region of interest" description="Alpha C-terminal domain (alpha-CTD)" evidence="1">
    <location>
        <begin position="248"/>
        <end position="332"/>
    </location>
</feature>
<feature type="strand" evidence="2">
    <location>
        <begin position="15"/>
        <end position="17"/>
    </location>
</feature>
<feature type="strand" evidence="2">
    <location>
        <begin position="21"/>
        <end position="31"/>
    </location>
</feature>
<feature type="helix" evidence="2">
    <location>
        <begin position="36"/>
        <end position="49"/>
    </location>
</feature>
<feature type="strand" evidence="2">
    <location>
        <begin position="53"/>
        <end position="63"/>
    </location>
</feature>
<feature type="strand" evidence="2">
    <location>
        <begin position="74"/>
        <end position="76"/>
    </location>
</feature>
<feature type="helix" evidence="2">
    <location>
        <begin position="78"/>
        <end position="87"/>
    </location>
</feature>
<feature type="strand" evidence="2">
    <location>
        <begin position="90"/>
        <end position="94"/>
    </location>
</feature>
<feature type="strand" evidence="2">
    <location>
        <begin position="96"/>
        <end position="104"/>
    </location>
</feature>
<feature type="strand" evidence="2">
    <location>
        <begin position="106"/>
        <end position="111"/>
    </location>
</feature>
<feature type="helix" evidence="2">
    <location>
        <begin position="112"/>
        <end position="114"/>
    </location>
</feature>
<feature type="strand" evidence="2">
    <location>
        <begin position="119"/>
        <end position="123"/>
    </location>
</feature>
<feature type="strand" evidence="2">
    <location>
        <begin position="128"/>
        <end position="133"/>
    </location>
</feature>
<feature type="strand" evidence="2">
    <location>
        <begin position="139"/>
        <end position="148"/>
    </location>
</feature>
<feature type="strand" evidence="2">
    <location>
        <begin position="150"/>
        <end position="152"/>
    </location>
</feature>
<feature type="strand" evidence="2">
    <location>
        <begin position="174"/>
        <end position="176"/>
    </location>
</feature>
<feature type="strand" evidence="2">
    <location>
        <begin position="179"/>
        <end position="188"/>
    </location>
</feature>
<feature type="strand" evidence="2">
    <location>
        <begin position="192"/>
        <end position="195"/>
    </location>
</feature>
<feature type="strand" evidence="2">
    <location>
        <begin position="198"/>
        <end position="206"/>
    </location>
</feature>
<feature type="strand" evidence="2">
    <location>
        <begin position="208"/>
        <end position="210"/>
    </location>
</feature>
<feature type="helix" evidence="2">
    <location>
        <begin position="212"/>
        <end position="226"/>
    </location>
</feature>
<organism>
    <name type="scientific">Xanthomonas oryzae pv. oryzae (strain PXO99A)</name>
    <dbReference type="NCBI Taxonomy" id="360094"/>
    <lineage>
        <taxon>Bacteria</taxon>
        <taxon>Pseudomonadati</taxon>
        <taxon>Pseudomonadota</taxon>
        <taxon>Gammaproteobacteria</taxon>
        <taxon>Lysobacterales</taxon>
        <taxon>Lysobacteraceae</taxon>
        <taxon>Xanthomonas</taxon>
    </lineage>
</organism>
<evidence type="ECO:0000255" key="1">
    <source>
        <dbReference type="HAMAP-Rule" id="MF_00059"/>
    </source>
</evidence>
<evidence type="ECO:0007829" key="2">
    <source>
        <dbReference type="PDB" id="6J9E"/>
    </source>
</evidence>
<dbReference type="EC" id="2.7.7.6" evidence="1"/>
<dbReference type="EMBL" id="CP000967">
    <property type="protein sequence ID" value="ACD57911.1"/>
    <property type="molecule type" value="Genomic_DNA"/>
</dbReference>
<dbReference type="RefSeq" id="WP_002811635.1">
    <property type="nucleotide sequence ID" value="NC_010717.2"/>
</dbReference>
<dbReference type="PDB" id="6J9E">
    <property type="method" value="EM"/>
    <property type="resolution" value="3.41 A"/>
    <property type="chains" value="A/B=1-332"/>
</dbReference>
<dbReference type="PDB" id="6J9F">
    <property type="method" value="EM"/>
    <property type="resolution" value="3.95 A"/>
    <property type="chains" value="A/B=1-332"/>
</dbReference>
<dbReference type="PDBsum" id="6J9E"/>
<dbReference type="PDBsum" id="6J9F"/>
<dbReference type="EMDB" id="EMD-9785"/>
<dbReference type="EMDB" id="EMD-9786"/>
<dbReference type="SMR" id="B2SQT4"/>
<dbReference type="KEGG" id="xop:PXO_04496"/>
<dbReference type="eggNOG" id="COG0202">
    <property type="taxonomic scope" value="Bacteria"/>
</dbReference>
<dbReference type="HOGENOM" id="CLU_053084_0_1_6"/>
<dbReference type="Proteomes" id="UP000001740">
    <property type="component" value="Chromosome"/>
</dbReference>
<dbReference type="GO" id="GO:0005737">
    <property type="term" value="C:cytoplasm"/>
    <property type="evidence" value="ECO:0007669"/>
    <property type="project" value="UniProtKB-ARBA"/>
</dbReference>
<dbReference type="GO" id="GO:0000428">
    <property type="term" value="C:DNA-directed RNA polymerase complex"/>
    <property type="evidence" value="ECO:0007669"/>
    <property type="project" value="UniProtKB-KW"/>
</dbReference>
<dbReference type="GO" id="GO:0003677">
    <property type="term" value="F:DNA binding"/>
    <property type="evidence" value="ECO:0007669"/>
    <property type="project" value="UniProtKB-UniRule"/>
</dbReference>
<dbReference type="GO" id="GO:0003899">
    <property type="term" value="F:DNA-directed RNA polymerase activity"/>
    <property type="evidence" value="ECO:0007669"/>
    <property type="project" value="UniProtKB-UniRule"/>
</dbReference>
<dbReference type="GO" id="GO:0046983">
    <property type="term" value="F:protein dimerization activity"/>
    <property type="evidence" value="ECO:0007669"/>
    <property type="project" value="InterPro"/>
</dbReference>
<dbReference type="GO" id="GO:0006351">
    <property type="term" value="P:DNA-templated transcription"/>
    <property type="evidence" value="ECO:0007669"/>
    <property type="project" value="UniProtKB-UniRule"/>
</dbReference>
<dbReference type="CDD" id="cd06928">
    <property type="entry name" value="RNAP_alpha_NTD"/>
    <property type="match status" value="1"/>
</dbReference>
<dbReference type="FunFam" id="1.10.150.20:FF:000001">
    <property type="entry name" value="DNA-directed RNA polymerase subunit alpha"/>
    <property type="match status" value="1"/>
</dbReference>
<dbReference type="FunFam" id="2.170.120.12:FF:000001">
    <property type="entry name" value="DNA-directed RNA polymerase subunit alpha"/>
    <property type="match status" value="1"/>
</dbReference>
<dbReference type="Gene3D" id="1.10.150.20">
    <property type="entry name" value="5' to 3' exonuclease, C-terminal subdomain"/>
    <property type="match status" value="1"/>
</dbReference>
<dbReference type="Gene3D" id="2.170.120.12">
    <property type="entry name" value="DNA-directed RNA polymerase, insert domain"/>
    <property type="match status" value="1"/>
</dbReference>
<dbReference type="Gene3D" id="3.30.1360.10">
    <property type="entry name" value="RNA polymerase, RBP11-like subunit"/>
    <property type="match status" value="1"/>
</dbReference>
<dbReference type="HAMAP" id="MF_00059">
    <property type="entry name" value="RNApol_bact_RpoA"/>
    <property type="match status" value="1"/>
</dbReference>
<dbReference type="InterPro" id="IPR011262">
    <property type="entry name" value="DNA-dir_RNA_pol_insert"/>
</dbReference>
<dbReference type="InterPro" id="IPR011263">
    <property type="entry name" value="DNA-dir_RNA_pol_RpoA/D/Rpb3"/>
</dbReference>
<dbReference type="InterPro" id="IPR011773">
    <property type="entry name" value="DNA-dir_RpoA"/>
</dbReference>
<dbReference type="InterPro" id="IPR036603">
    <property type="entry name" value="RBP11-like"/>
</dbReference>
<dbReference type="InterPro" id="IPR011260">
    <property type="entry name" value="RNAP_asu_C"/>
</dbReference>
<dbReference type="InterPro" id="IPR036643">
    <property type="entry name" value="RNApol_insert_sf"/>
</dbReference>
<dbReference type="NCBIfam" id="NF003513">
    <property type="entry name" value="PRK05182.1-2"/>
    <property type="match status" value="1"/>
</dbReference>
<dbReference type="NCBIfam" id="NF003519">
    <property type="entry name" value="PRK05182.2-5"/>
    <property type="match status" value="1"/>
</dbReference>
<dbReference type="NCBIfam" id="TIGR02027">
    <property type="entry name" value="rpoA"/>
    <property type="match status" value="1"/>
</dbReference>
<dbReference type="Pfam" id="PF01000">
    <property type="entry name" value="RNA_pol_A_bac"/>
    <property type="match status" value="1"/>
</dbReference>
<dbReference type="Pfam" id="PF03118">
    <property type="entry name" value="RNA_pol_A_CTD"/>
    <property type="match status" value="1"/>
</dbReference>
<dbReference type="Pfam" id="PF01193">
    <property type="entry name" value="RNA_pol_L"/>
    <property type="match status" value="1"/>
</dbReference>
<dbReference type="SMART" id="SM00662">
    <property type="entry name" value="RPOLD"/>
    <property type="match status" value="1"/>
</dbReference>
<dbReference type="SUPFAM" id="SSF47789">
    <property type="entry name" value="C-terminal domain of RNA polymerase alpha subunit"/>
    <property type="match status" value="1"/>
</dbReference>
<dbReference type="SUPFAM" id="SSF56553">
    <property type="entry name" value="Insert subdomain of RNA polymerase alpha subunit"/>
    <property type="match status" value="1"/>
</dbReference>
<dbReference type="SUPFAM" id="SSF55257">
    <property type="entry name" value="RBP11-like subunits of RNA polymerase"/>
    <property type="match status" value="1"/>
</dbReference>